<comment type="function">
    <text evidence="1">Has antibacterial activity.</text>
</comment>
<comment type="subcellular location">
    <subcellularLocation>
        <location evidence="1">Secreted</location>
    </subcellularLocation>
</comment>
<comment type="tissue specificity">
    <text>Expressed by the venom gland.</text>
</comment>
<comment type="PTM">
    <text evidence="3">Contains 5 disulfide bonds.</text>
</comment>
<comment type="similarity">
    <text evidence="3">Belongs to the venom protein 11 family. 01 (wap-1) subfamily.</text>
</comment>
<name>TXF12_LYCSI</name>
<sequence>MNSKIFAVLLLLAFLSCVLSDQYCPKSSITACKKMNIRNDCCKDDDCTGGSWCCATPCGNICKYPTDRPGGKRAAGGKSCKTGYVY</sequence>
<dbReference type="EMBL" id="EU926129">
    <property type="protein sequence ID" value="ACI41461.1"/>
    <property type="molecule type" value="mRNA"/>
</dbReference>
<dbReference type="EMBL" id="FM864133">
    <property type="protein sequence ID" value="CAS03730.1"/>
    <property type="molecule type" value="mRNA"/>
</dbReference>
<dbReference type="SMR" id="B6DD45"/>
<dbReference type="ArachnoServer" id="AS001068">
    <property type="toxin name" value="U15-lycotoxin-Ls1c"/>
</dbReference>
<dbReference type="GO" id="GO:0005576">
    <property type="term" value="C:extracellular region"/>
    <property type="evidence" value="ECO:0007669"/>
    <property type="project" value="UniProtKB-SubCell"/>
</dbReference>
<dbReference type="GO" id="GO:0090729">
    <property type="term" value="F:toxin activity"/>
    <property type="evidence" value="ECO:0007669"/>
    <property type="project" value="UniProtKB-KW"/>
</dbReference>
<dbReference type="GO" id="GO:0042742">
    <property type="term" value="P:defense response to bacterium"/>
    <property type="evidence" value="ECO:0007669"/>
    <property type="project" value="UniProtKB-KW"/>
</dbReference>
<dbReference type="Gene3D" id="4.10.75.10">
    <property type="entry name" value="Elafin-like"/>
    <property type="match status" value="1"/>
</dbReference>
<dbReference type="InterPro" id="IPR036645">
    <property type="entry name" value="Elafin-like_sf"/>
</dbReference>
<dbReference type="SUPFAM" id="SSF57256">
    <property type="entry name" value="Elafin-like"/>
    <property type="match status" value="1"/>
</dbReference>
<reference key="1">
    <citation type="journal article" date="2010" name="Zoology">
        <title>Transcriptome analysis of the venom glands of the Chinese wolf spider Lycosa singoriensis.</title>
        <authorList>
            <person name="Zhang Y."/>
            <person name="Chen J."/>
            <person name="Tang X."/>
            <person name="Wang F."/>
            <person name="Jiang L."/>
            <person name="Xiong X."/>
            <person name="Wang M."/>
            <person name="Rong M."/>
            <person name="Liu Z."/>
            <person name="Liang S."/>
        </authorList>
    </citation>
    <scope>NUCLEOTIDE SEQUENCE [LARGE SCALE MRNA]</scope>
    <source>
        <tissue>Venom gland</tissue>
    </source>
</reference>
<feature type="signal peptide" evidence="2">
    <location>
        <begin position="1"/>
        <end position="20"/>
    </location>
</feature>
<feature type="chain" id="PRO_0000401888" description="U15-lycotoxin-Ls1c">
    <location>
        <begin position="21"/>
        <end position="86"/>
    </location>
</feature>
<feature type="domain" description="WAP">
    <location>
        <begin position="21"/>
        <end position="66"/>
    </location>
</feature>
<feature type="disulfide bond" evidence="1">
    <location>
        <begin position="24"/>
        <end position="54"/>
    </location>
</feature>
<feature type="disulfide bond" evidence="1">
    <location>
        <begin position="32"/>
        <end position="58"/>
    </location>
</feature>
<feature type="disulfide bond" evidence="1">
    <location>
        <begin position="41"/>
        <end position="53"/>
    </location>
</feature>
<feature type="disulfide bond" evidence="3">
    <location>
        <begin position="42"/>
        <end position="80"/>
    </location>
</feature>
<feature type="disulfide bond" evidence="1">
    <location>
        <begin position="47"/>
        <end position="62"/>
    </location>
</feature>
<protein>
    <recommendedName>
        <fullName>U15-lycotoxin-Ls1c</fullName>
    </recommendedName>
    <alternativeName>
        <fullName>Toxin-like structure LSTX-N12</fullName>
    </alternativeName>
</protein>
<proteinExistence type="evidence at transcript level"/>
<organism>
    <name type="scientific">Lycosa singoriensis</name>
    <name type="common">Wolf spider</name>
    <name type="synonym">Aranea singoriensis</name>
    <dbReference type="NCBI Taxonomy" id="434756"/>
    <lineage>
        <taxon>Eukaryota</taxon>
        <taxon>Metazoa</taxon>
        <taxon>Ecdysozoa</taxon>
        <taxon>Arthropoda</taxon>
        <taxon>Chelicerata</taxon>
        <taxon>Arachnida</taxon>
        <taxon>Araneae</taxon>
        <taxon>Araneomorphae</taxon>
        <taxon>Entelegynae</taxon>
        <taxon>Lycosoidea</taxon>
        <taxon>Lycosidae</taxon>
        <taxon>Lycosa</taxon>
    </lineage>
</organism>
<keyword id="KW-0044">Antibiotic</keyword>
<keyword id="KW-0929">Antimicrobial</keyword>
<keyword id="KW-1015">Disulfide bond</keyword>
<keyword id="KW-0964">Secreted</keyword>
<keyword id="KW-0732">Signal</keyword>
<keyword id="KW-0800">Toxin</keyword>
<evidence type="ECO:0000250" key="1"/>
<evidence type="ECO:0000255" key="2"/>
<evidence type="ECO:0000305" key="3"/>
<accession>B6DD45</accession>